<sequence length="153" mass="17405">MAKETQLQVEAIKNGTVIDHIPAQIGIKVLKLFDMHNSSQRVTIGLNLPSSALGHKDLLKIENVFINEEQASKLALYAPHATVNQIENYEVVKKLALELPEKINNVFECPNSNCISHNEPVESSFKVFEKKEEIRLKCKYCEKVFSREIVTER</sequence>
<comment type="function">
    <text evidence="1">Involved in allosteric regulation of aspartate carbamoyltransferase.</text>
</comment>
<comment type="cofactor">
    <cofactor evidence="1">
        <name>Zn(2+)</name>
        <dbReference type="ChEBI" id="CHEBI:29105"/>
    </cofactor>
    <text evidence="1">Binds 1 zinc ion per subunit.</text>
</comment>
<comment type="subunit">
    <text evidence="1">Contains catalytic and regulatory chains.</text>
</comment>
<comment type="similarity">
    <text evidence="1">Belongs to the PyrI family.</text>
</comment>
<accession>Q87LF7</accession>
<organism>
    <name type="scientific">Vibrio parahaemolyticus serotype O3:K6 (strain RIMD 2210633)</name>
    <dbReference type="NCBI Taxonomy" id="223926"/>
    <lineage>
        <taxon>Bacteria</taxon>
        <taxon>Pseudomonadati</taxon>
        <taxon>Pseudomonadota</taxon>
        <taxon>Gammaproteobacteria</taxon>
        <taxon>Vibrionales</taxon>
        <taxon>Vibrionaceae</taxon>
        <taxon>Vibrio</taxon>
    </lineage>
</organism>
<keyword id="KW-0479">Metal-binding</keyword>
<keyword id="KW-0665">Pyrimidine biosynthesis</keyword>
<keyword id="KW-0862">Zinc</keyword>
<protein>
    <recommendedName>
        <fullName evidence="1">Aspartate carbamoyltransferase regulatory chain</fullName>
    </recommendedName>
</protein>
<reference key="1">
    <citation type="journal article" date="2003" name="Lancet">
        <title>Genome sequence of Vibrio parahaemolyticus: a pathogenic mechanism distinct from that of V. cholerae.</title>
        <authorList>
            <person name="Makino K."/>
            <person name="Oshima K."/>
            <person name="Kurokawa K."/>
            <person name="Yokoyama K."/>
            <person name="Uda T."/>
            <person name="Tagomori K."/>
            <person name="Iijima Y."/>
            <person name="Najima M."/>
            <person name="Nakano M."/>
            <person name="Yamashita A."/>
            <person name="Kubota Y."/>
            <person name="Kimura S."/>
            <person name="Yasunaga T."/>
            <person name="Honda T."/>
            <person name="Shinagawa H."/>
            <person name="Hattori M."/>
            <person name="Iida T."/>
        </authorList>
    </citation>
    <scope>NUCLEOTIDE SEQUENCE [LARGE SCALE GENOMIC DNA]</scope>
    <source>
        <strain>RIMD 2210633</strain>
    </source>
</reference>
<gene>
    <name evidence="1" type="primary">pyrI</name>
    <name type="ordered locus">VP2655</name>
</gene>
<evidence type="ECO:0000255" key="1">
    <source>
        <dbReference type="HAMAP-Rule" id="MF_00002"/>
    </source>
</evidence>
<feature type="chain" id="PRO_0000142319" description="Aspartate carbamoyltransferase regulatory chain">
    <location>
        <begin position="1"/>
        <end position="153"/>
    </location>
</feature>
<feature type="binding site" evidence="1">
    <location>
        <position position="109"/>
    </location>
    <ligand>
        <name>Zn(2+)</name>
        <dbReference type="ChEBI" id="CHEBI:29105"/>
    </ligand>
</feature>
<feature type="binding site" evidence="1">
    <location>
        <position position="114"/>
    </location>
    <ligand>
        <name>Zn(2+)</name>
        <dbReference type="ChEBI" id="CHEBI:29105"/>
    </ligand>
</feature>
<feature type="binding site" evidence="1">
    <location>
        <position position="138"/>
    </location>
    <ligand>
        <name>Zn(2+)</name>
        <dbReference type="ChEBI" id="CHEBI:29105"/>
    </ligand>
</feature>
<feature type="binding site" evidence="1">
    <location>
        <position position="141"/>
    </location>
    <ligand>
        <name>Zn(2+)</name>
        <dbReference type="ChEBI" id="CHEBI:29105"/>
    </ligand>
</feature>
<name>PYRI_VIBPA</name>
<proteinExistence type="inferred from homology"/>
<dbReference type="EMBL" id="BA000031">
    <property type="protein sequence ID" value="BAC60918.1"/>
    <property type="molecule type" value="Genomic_DNA"/>
</dbReference>
<dbReference type="RefSeq" id="NP_799034.1">
    <property type="nucleotide sequence ID" value="NC_004603.1"/>
</dbReference>
<dbReference type="RefSeq" id="WP_005455107.1">
    <property type="nucleotide sequence ID" value="NC_004603.1"/>
</dbReference>
<dbReference type="SMR" id="Q87LF7"/>
<dbReference type="GeneID" id="1190200"/>
<dbReference type="KEGG" id="vpa:VP2655"/>
<dbReference type="PATRIC" id="fig|223926.6.peg.2550"/>
<dbReference type="eggNOG" id="COG1781">
    <property type="taxonomic scope" value="Bacteria"/>
</dbReference>
<dbReference type="HOGENOM" id="CLU_128576_0_0_6"/>
<dbReference type="Proteomes" id="UP000002493">
    <property type="component" value="Chromosome 1"/>
</dbReference>
<dbReference type="GO" id="GO:0009347">
    <property type="term" value="C:aspartate carbamoyltransferase complex"/>
    <property type="evidence" value="ECO:0007669"/>
    <property type="project" value="InterPro"/>
</dbReference>
<dbReference type="GO" id="GO:0046872">
    <property type="term" value="F:metal ion binding"/>
    <property type="evidence" value="ECO:0007669"/>
    <property type="project" value="UniProtKB-KW"/>
</dbReference>
<dbReference type="GO" id="GO:0006207">
    <property type="term" value="P:'de novo' pyrimidine nucleobase biosynthetic process"/>
    <property type="evidence" value="ECO:0007669"/>
    <property type="project" value="InterPro"/>
</dbReference>
<dbReference type="GO" id="GO:0006221">
    <property type="term" value="P:pyrimidine nucleotide biosynthetic process"/>
    <property type="evidence" value="ECO:0007669"/>
    <property type="project" value="UniProtKB-UniRule"/>
</dbReference>
<dbReference type="Gene3D" id="2.30.30.20">
    <property type="entry name" value="Aspartate carbamoyltransferase regulatory subunit, C-terminal domain"/>
    <property type="match status" value="1"/>
</dbReference>
<dbReference type="Gene3D" id="3.30.70.140">
    <property type="entry name" value="Aspartate carbamoyltransferase regulatory subunit, N-terminal domain"/>
    <property type="match status" value="1"/>
</dbReference>
<dbReference type="HAMAP" id="MF_00002">
    <property type="entry name" value="Asp_carb_tr_reg"/>
    <property type="match status" value="1"/>
</dbReference>
<dbReference type="InterPro" id="IPR020545">
    <property type="entry name" value="Asp_carbamoyltransf_reg_N"/>
</dbReference>
<dbReference type="InterPro" id="IPR002801">
    <property type="entry name" value="Asp_carbamoylTrfase_reg"/>
</dbReference>
<dbReference type="InterPro" id="IPR020542">
    <property type="entry name" value="Asp_carbamoyltrfase_reg_C"/>
</dbReference>
<dbReference type="InterPro" id="IPR036792">
    <property type="entry name" value="Asp_carbatrfase_reg_C_sf"/>
</dbReference>
<dbReference type="InterPro" id="IPR036793">
    <property type="entry name" value="Asp_carbatrfase_reg_N_sf"/>
</dbReference>
<dbReference type="NCBIfam" id="TIGR00240">
    <property type="entry name" value="ATCase_reg"/>
    <property type="match status" value="1"/>
</dbReference>
<dbReference type="PANTHER" id="PTHR35805">
    <property type="entry name" value="ASPARTATE CARBAMOYLTRANSFERASE REGULATORY CHAIN"/>
    <property type="match status" value="1"/>
</dbReference>
<dbReference type="PANTHER" id="PTHR35805:SF1">
    <property type="entry name" value="ASPARTATE CARBAMOYLTRANSFERASE REGULATORY CHAIN"/>
    <property type="match status" value="1"/>
</dbReference>
<dbReference type="Pfam" id="PF01948">
    <property type="entry name" value="PyrI"/>
    <property type="match status" value="1"/>
</dbReference>
<dbReference type="Pfam" id="PF02748">
    <property type="entry name" value="PyrI_C"/>
    <property type="match status" value="1"/>
</dbReference>
<dbReference type="SUPFAM" id="SSF57825">
    <property type="entry name" value="Aspartate carbamoyltransferase, Regulatory-chain, C-terminal domain"/>
    <property type="match status" value="1"/>
</dbReference>
<dbReference type="SUPFAM" id="SSF54893">
    <property type="entry name" value="Aspartate carbamoyltransferase, Regulatory-chain, N-terminal domain"/>
    <property type="match status" value="1"/>
</dbReference>